<protein>
    <recommendedName>
        <fullName evidence="1">Adenine deaminase</fullName>
        <shortName evidence="1">Adenase</shortName>
        <shortName evidence="1">Adenine aminase</shortName>
        <ecNumber evidence="1">3.5.4.2</ecNumber>
    </recommendedName>
</protein>
<dbReference type="EC" id="3.5.4.2" evidence="1"/>
<dbReference type="EMBL" id="AJ965256">
    <property type="protein sequence ID" value="CAI82924.1"/>
    <property type="molecule type" value="Genomic_DNA"/>
</dbReference>
<dbReference type="RefSeq" id="WP_011309275.1">
    <property type="nucleotide sequence ID" value="NC_007356.1"/>
</dbReference>
<dbReference type="SMR" id="Q3ZXH1"/>
<dbReference type="KEGG" id="deh:cbdbA769"/>
<dbReference type="HOGENOM" id="CLU_027935_0_0_0"/>
<dbReference type="Proteomes" id="UP000000433">
    <property type="component" value="Chromosome"/>
</dbReference>
<dbReference type="GO" id="GO:0000034">
    <property type="term" value="F:adenine deaminase activity"/>
    <property type="evidence" value="ECO:0007669"/>
    <property type="project" value="UniProtKB-UniRule"/>
</dbReference>
<dbReference type="GO" id="GO:0006146">
    <property type="term" value="P:adenine catabolic process"/>
    <property type="evidence" value="ECO:0007669"/>
    <property type="project" value="InterPro"/>
</dbReference>
<dbReference type="CDD" id="cd01295">
    <property type="entry name" value="AdeC"/>
    <property type="match status" value="1"/>
</dbReference>
<dbReference type="Gene3D" id="3.20.20.140">
    <property type="entry name" value="Metal-dependent hydrolases"/>
    <property type="match status" value="1"/>
</dbReference>
<dbReference type="Gene3D" id="2.30.40.10">
    <property type="entry name" value="Urease, subunit C, domain 1"/>
    <property type="match status" value="1"/>
</dbReference>
<dbReference type="HAMAP" id="MF_01518">
    <property type="entry name" value="Adenine_deamin"/>
    <property type="match status" value="1"/>
</dbReference>
<dbReference type="InterPro" id="IPR006679">
    <property type="entry name" value="Adenine_deam"/>
</dbReference>
<dbReference type="InterPro" id="IPR026912">
    <property type="entry name" value="Adenine_deam_C"/>
</dbReference>
<dbReference type="InterPro" id="IPR006680">
    <property type="entry name" value="Amidohydro-rel"/>
</dbReference>
<dbReference type="InterPro" id="IPR011059">
    <property type="entry name" value="Metal-dep_hydrolase_composite"/>
</dbReference>
<dbReference type="InterPro" id="IPR032466">
    <property type="entry name" value="Metal_Hydrolase"/>
</dbReference>
<dbReference type="NCBIfam" id="TIGR01178">
    <property type="entry name" value="ade"/>
    <property type="match status" value="1"/>
</dbReference>
<dbReference type="PANTHER" id="PTHR11113:SF2">
    <property type="entry name" value="ADENINE DEAMINASE"/>
    <property type="match status" value="1"/>
</dbReference>
<dbReference type="PANTHER" id="PTHR11113">
    <property type="entry name" value="N-ACETYLGLUCOSAMINE-6-PHOSPHATE DEACETYLASE"/>
    <property type="match status" value="1"/>
</dbReference>
<dbReference type="Pfam" id="PF13382">
    <property type="entry name" value="Adenine_deam_C"/>
    <property type="match status" value="1"/>
</dbReference>
<dbReference type="Pfam" id="PF01979">
    <property type="entry name" value="Amidohydro_1"/>
    <property type="match status" value="1"/>
</dbReference>
<dbReference type="SUPFAM" id="SSF51338">
    <property type="entry name" value="Composite domain of metallo-dependent hydrolases"/>
    <property type="match status" value="1"/>
</dbReference>
<dbReference type="SUPFAM" id="SSF51556">
    <property type="entry name" value="Metallo-dependent hydrolases"/>
    <property type="match status" value="1"/>
</dbReference>
<sequence length="571" mass="61452">MQTNLSQLIKVARGETEADLVLLNARVINVFNAEIEQANVAVFDGKIAGVGDYRHGKEVIDLKGAYLLPGLINGHTHVESSMLDIAQYARAVVSHGTLALITDLHEISNVCGKEGIDYVLDASADLPLSIFLQVPSCVPATHLETAGAEINSQDVADLLRLPNVTGLGEMMNFPGVLFGVPSVLDKIIAAAGKVLDGHAPGLSGKDLNAYISAGIHSDHECIHLAEAKEKLARGMYIMIREGSSEKNLAELLPLVTDQTYKRCLFVVDDRSCADLKSDGDIDAVVRKAIRLGLDPVRAIQLASINTAEYFHLQGHGAIAPGYLANMIVCQNLEQLDIDMVFHKGKLVAEKGQALFKPQSRIPKSLLNSIHIRPFDTKDLILKTIQPQIPVIEVIPGQIVTRRLDLKIPAENGVIKANTELDLLKIVVMERHHQSGNMGHGLIRGFGLKKGAIASSVAHDSHNVVAVGTNDADLYTAIKELERINGGIALAVDGQVTASVSLPVAGLLSTKPLEEVVTELEEINNQVAKLGCKLSAPFATLSFMALPVIPELRLTDLGLVDVKTFKLIPQET</sequence>
<accession>Q3ZXH1</accession>
<comment type="catalytic activity">
    <reaction evidence="1">
        <text>adenine + H2O + H(+) = hypoxanthine + NH4(+)</text>
        <dbReference type="Rhea" id="RHEA:23688"/>
        <dbReference type="ChEBI" id="CHEBI:15377"/>
        <dbReference type="ChEBI" id="CHEBI:15378"/>
        <dbReference type="ChEBI" id="CHEBI:16708"/>
        <dbReference type="ChEBI" id="CHEBI:17368"/>
        <dbReference type="ChEBI" id="CHEBI:28938"/>
        <dbReference type="EC" id="3.5.4.2"/>
    </reaction>
</comment>
<comment type="cofactor">
    <cofactor evidence="1">
        <name>Mn(2+)</name>
        <dbReference type="ChEBI" id="CHEBI:29035"/>
    </cofactor>
</comment>
<comment type="similarity">
    <text evidence="1">Belongs to the metallo-dependent hydrolases superfamily. Adenine deaminase family.</text>
</comment>
<reference key="1">
    <citation type="journal article" date="2005" name="Nat. Biotechnol.">
        <title>Genome sequence of the chlorinated compound-respiring bacterium Dehalococcoides species strain CBDB1.</title>
        <authorList>
            <person name="Kube M."/>
            <person name="Beck A."/>
            <person name="Zinder S.H."/>
            <person name="Kuhl H."/>
            <person name="Reinhardt R."/>
            <person name="Adrian L."/>
        </authorList>
    </citation>
    <scope>NUCLEOTIDE SEQUENCE [LARGE SCALE GENOMIC DNA]</scope>
    <source>
        <strain>CBDB1</strain>
    </source>
</reference>
<gene>
    <name evidence="1" type="primary">ade</name>
    <name type="ordered locus">cbdbA769</name>
</gene>
<feature type="chain" id="PRO_0000142415" description="Adenine deaminase">
    <location>
        <begin position="1"/>
        <end position="571"/>
    </location>
</feature>
<proteinExistence type="inferred from homology"/>
<evidence type="ECO:0000255" key="1">
    <source>
        <dbReference type="HAMAP-Rule" id="MF_01518"/>
    </source>
</evidence>
<name>ADEC_DEHMC</name>
<organism>
    <name type="scientific">Dehalococcoides mccartyi (strain CBDB1)</name>
    <dbReference type="NCBI Taxonomy" id="255470"/>
    <lineage>
        <taxon>Bacteria</taxon>
        <taxon>Bacillati</taxon>
        <taxon>Chloroflexota</taxon>
        <taxon>Dehalococcoidia</taxon>
        <taxon>Dehalococcoidales</taxon>
        <taxon>Dehalococcoidaceae</taxon>
        <taxon>Dehalococcoides</taxon>
    </lineage>
</organism>
<keyword id="KW-0378">Hydrolase</keyword>
<keyword id="KW-0464">Manganese</keyword>